<comment type="function">
    <text evidence="1">May regulate transcriptional activity.</text>
</comment>
<comment type="subunit">
    <text evidence="1">Interacts with ZNF202.</text>
</comment>
<comment type="subcellular location">
    <subcellularLocation>
        <location evidence="2">Nucleus</location>
    </subcellularLocation>
</comment>
<keyword id="KW-0539">Nucleus</keyword>
<sequence length="179" mass="19057">MAATEPILAATGSPAAVPPEKPEGAGSSSDPECNCVGSSLPEASPPAPEPSSLNVAVPEAIPTPQAAASAAPELPLGPAPVSVAPQAEAEARSTPGPAGSRLGPETFRQRFRQFRYQDAAGPREAFRQLRELSRQWLRPDIRTKEQIVEMLVQEQLLAILPEAARARRIRRRTDVRITG</sequence>
<dbReference type="EMBL" id="DQ977504">
    <property type="protein sequence ID" value="ABM89298.1"/>
    <property type="molecule type" value="Genomic_DNA"/>
</dbReference>
<dbReference type="SMR" id="A2T7M0"/>
<dbReference type="GO" id="GO:0005634">
    <property type="term" value="C:nucleus"/>
    <property type="evidence" value="ECO:0007669"/>
    <property type="project" value="UniProtKB-SubCell"/>
</dbReference>
<dbReference type="CDD" id="cd07936">
    <property type="entry name" value="SCAN"/>
    <property type="match status" value="1"/>
</dbReference>
<dbReference type="FunFam" id="1.10.4020.10:FF:000003">
    <property type="entry name" value="SCAN domain-containing protein 1"/>
    <property type="match status" value="1"/>
</dbReference>
<dbReference type="Gene3D" id="1.10.4020.10">
    <property type="entry name" value="DNA breaking-rejoining enzymes"/>
    <property type="match status" value="1"/>
</dbReference>
<dbReference type="InterPro" id="IPR050916">
    <property type="entry name" value="SCAN-C2H2_zinc_finger"/>
</dbReference>
<dbReference type="InterPro" id="IPR003309">
    <property type="entry name" value="SCAN_dom"/>
</dbReference>
<dbReference type="InterPro" id="IPR038269">
    <property type="entry name" value="SCAN_sf"/>
</dbReference>
<dbReference type="PANTHER" id="PTHR45935">
    <property type="entry name" value="PROTEIN ZBED8-RELATED"/>
    <property type="match status" value="1"/>
</dbReference>
<dbReference type="PANTHER" id="PTHR45935:SF10">
    <property type="entry name" value="SCAN DOMAIN-CONTAINING 1"/>
    <property type="match status" value="1"/>
</dbReference>
<dbReference type="Pfam" id="PF02023">
    <property type="entry name" value="SCAN"/>
    <property type="match status" value="1"/>
</dbReference>
<dbReference type="SMART" id="SM00431">
    <property type="entry name" value="SCAN"/>
    <property type="match status" value="1"/>
</dbReference>
<dbReference type="SUPFAM" id="SSF47353">
    <property type="entry name" value="Retrovirus capsid dimerization domain-like"/>
    <property type="match status" value="1"/>
</dbReference>
<dbReference type="PROSITE" id="PS50804">
    <property type="entry name" value="SCAN_BOX"/>
    <property type="match status" value="1"/>
</dbReference>
<reference key="1">
    <citation type="submission" date="2006-08" db="EMBL/GenBank/DDBJ databases">
        <title>Positive selection in transcription factor genes on the human lineage.</title>
        <authorList>
            <person name="Nickel G.C."/>
            <person name="Tefft D.L."/>
            <person name="Trevarthen K."/>
            <person name="Funt J."/>
            <person name="Adams M.D."/>
        </authorList>
    </citation>
    <scope>NUCLEOTIDE SEQUENCE [GENOMIC DNA]</scope>
</reference>
<accession>A2T7M0</accession>
<gene>
    <name type="primary">SCAND1</name>
</gene>
<organism>
    <name type="scientific">Pongo pygmaeus</name>
    <name type="common">Bornean orangutan</name>
    <dbReference type="NCBI Taxonomy" id="9600"/>
    <lineage>
        <taxon>Eukaryota</taxon>
        <taxon>Metazoa</taxon>
        <taxon>Chordata</taxon>
        <taxon>Craniata</taxon>
        <taxon>Vertebrata</taxon>
        <taxon>Euteleostomi</taxon>
        <taxon>Mammalia</taxon>
        <taxon>Eutheria</taxon>
        <taxon>Euarchontoglires</taxon>
        <taxon>Primates</taxon>
        <taxon>Haplorrhini</taxon>
        <taxon>Catarrhini</taxon>
        <taxon>Hominidae</taxon>
        <taxon>Pongo</taxon>
    </lineage>
</organism>
<protein>
    <recommendedName>
        <fullName>SCAN domain-containing protein 1</fullName>
    </recommendedName>
</protein>
<proteinExistence type="inferred from homology"/>
<name>SCND1_PONPY</name>
<feature type="chain" id="PRO_0000285509" description="SCAN domain-containing protein 1">
    <location>
        <begin position="1"/>
        <end position="179"/>
    </location>
</feature>
<feature type="domain" description="SCAN box" evidence="2">
    <location>
        <begin position="108"/>
        <end position="166"/>
    </location>
</feature>
<feature type="region of interest" description="Disordered" evidence="3">
    <location>
        <begin position="1"/>
        <end position="108"/>
    </location>
</feature>
<feature type="compositionally biased region" description="Low complexity" evidence="3">
    <location>
        <begin position="60"/>
        <end position="80"/>
    </location>
</feature>
<evidence type="ECO:0000250" key="1"/>
<evidence type="ECO:0000255" key="2">
    <source>
        <dbReference type="PROSITE-ProRule" id="PRU00187"/>
    </source>
</evidence>
<evidence type="ECO:0000256" key="3">
    <source>
        <dbReference type="SAM" id="MobiDB-lite"/>
    </source>
</evidence>